<gene>
    <name type="primary">HY5</name>
</gene>
<evidence type="ECO:0000250" key="1"/>
<evidence type="ECO:0000255" key="2">
    <source>
        <dbReference type="PROSITE-ProRule" id="PRU00978"/>
    </source>
</evidence>
<evidence type="ECO:0000256" key="3">
    <source>
        <dbReference type="SAM" id="MobiDB-lite"/>
    </source>
</evidence>
<evidence type="ECO:0000269" key="4">
    <source>
    </source>
</evidence>
<evidence type="ECO:0000305" key="5"/>
<sequence length="158" mass="17341">MQEQATSSIAASSLPSSSERSSSSALHHELKEGMESDDEIRRVPEMGGEATGTTSASGRDGVSAAGQAQPSAGTQRKRGRSPADKENKRLKRLLRNRVSAQQARERKKAYLIDLEARVKELETKNAELEERLSTLQNENQMLRHILKNTTAGAQEGRK</sequence>
<comment type="function">
    <text evidence="4">Transcription factor that promotes photomorphogenesis in the light and positively regulates fruit pigmentation and fruit nutritional quality. Probably acts downstream of the light receptor network and directly affects transcription of light-induced genes.</text>
</comment>
<comment type="subunit">
    <text>Interacts with COP1.</text>
</comment>
<comment type="subcellular location">
    <subcellularLocation>
        <location>Nucleus</location>
    </subcellularLocation>
</comment>
<comment type="PTM">
    <text evidence="1">Ubiquitinated by COP1. Ubiquitination takes place in darkness and leads to its subsequent degradation, thereby preventing to activate photomorphogenesis signals (By similarity).</text>
</comment>
<comment type="miscellaneous">
    <text>When it is down-regulated, plants exhibit defects in light responses, including inhibited seedling photomorphogenesis, loss of thylakoid organization, and reduced carotenoid accumulation.</text>
</comment>
<comment type="similarity">
    <text evidence="5">Belongs to the bZIP family.</text>
</comment>
<proteinExistence type="evidence at transcript level"/>
<reference key="1">
    <citation type="submission" date="1998-10" db="EMBL/GenBank/DDBJ databases">
        <title>The tomato THY5 gene encodes a protein containing a bZIP transcription factor domain.</title>
        <authorList>
            <person name="Mustilli A."/>
            <person name="Formiggini F."/>
            <person name="Bowler C."/>
        </authorList>
    </citation>
    <scope>NUCLEOTIDE SEQUENCE [MRNA]</scope>
</reference>
<reference key="2">
    <citation type="journal article" date="2004" name="Proc. Natl. Acad. Sci. U.S.A.">
        <title>Manipulation of light signal transduction as a means of modifying fruit nutritional quality in tomato.</title>
        <authorList>
            <person name="Liu Y."/>
            <person name="Roof S."/>
            <person name="Ye Z."/>
            <person name="Barry C."/>
            <person name="van Tuinen A."/>
            <person name="Vrebalov J."/>
            <person name="Bowler C."/>
            <person name="Giovannoni J."/>
        </authorList>
    </citation>
    <scope>FUNCTION</scope>
</reference>
<protein>
    <recommendedName>
        <fullName>Transcription factor HY5</fullName>
    </recommendedName>
    <alternativeName>
        <fullName>LeHY5</fullName>
    </alternativeName>
    <alternativeName>
        <fullName>tHY5</fullName>
    </alternativeName>
</protein>
<name>HY5_SOLLC</name>
<dbReference type="EMBL" id="AJ011914">
    <property type="protein sequence ID" value="CAB57979.1"/>
    <property type="molecule type" value="mRNA"/>
</dbReference>
<dbReference type="RefSeq" id="NP_001234820.1">
    <property type="nucleotide sequence ID" value="NM_001247891.2"/>
</dbReference>
<dbReference type="RefSeq" id="XP_019070577.1">
    <property type="nucleotide sequence ID" value="XM_019215032.1"/>
</dbReference>
<dbReference type="SMR" id="Q9SM50"/>
<dbReference type="FunCoup" id="Q9SM50">
    <property type="interactions" value="236"/>
</dbReference>
<dbReference type="STRING" id="4081.Q9SM50"/>
<dbReference type="PaxDb" id="4081-Solyc08g061130.2.1"/>
<dbReference type="EnsemblPlants" id="Solyc08g061130.3.1">
    <property type="protein sequence ID" value="Solyc08g061130.3.1"/>
    <property type="gene ID" value="Solyc08g061130.3"/>
</dbReference>
<dbReference type="GeneID" id="543733"/>
<dbReference type="Gramene" id="Solyc08g061130.3.1">
    <property type="protein sequence ID" value="Solyc08g061130.3.1"/>
    <property type="gene ID" value="Solyc08g061130.3"/>
</dbReference>
<dbReference type="KEGG" id="sly:543733"/>
<dbReference type="eggNOG" id="KOG1414">
    <property type="taxonomic scope" value="Eukaryota"/>
</dbReference>
<dbReference type="HOGENOM" id="CLU_068771_1_0_1"/>
<dbReference type="InParanoid" id="Q9SM50"/>
<dbReference type="OMA" id="HFNICEE"/>
<dbReference type="OrthoDB" id="674948at2759"/>
<dbReference type="PhylomeDB" id="Q9SM50"/>
<dbReference type="Proteomes" id="UP000004994">
    <property type="component" value="Chromosome 8"/>
</dbReference>
<dbReference type="GO" id="GO:0005634">
    <property type="term" value="C:nucleus"/>
    <property type="evidence" value="ECO:0000318"/>
    <property type="project" value="GO_Central"/>
</dbReference>
<dbReference type="GO" id="GO:0003677">
    <property type="term" value="F:DNA binding"/>
    <property type="evidence" value="ECO:0007669"/>
    <property type="project" value="UniProtKB-KW"/>
</dbReference>
<dbReference type="GO" id="GO:0000981">
    <property type="term" value="F:DNA-binding transcription factor activity, RNA polymerase II-specific"/>
    <property type="evidence" value="ECO:0007669"/>
    <property type="project" value="InterPro"/>
</dbReference>
<dbReference type="GO" id="GO:0045944">
    <property type="term" value="P:positive regulation of transcription by RNA polymerase II"/>
    <property type="evidence" value="ECO:0007669"/>
    <property type="project" value="InterPro"/>
</dbReference>
<dbReference type="GO" id="GO:0010017">
    <property type="term" value="P:red or far-red light signaling pathway"/>
    <property type="evidence" value="ECO:0000318"/>
    <property type="project" value="GO_Central"/>
</dbReference>
<dbReference type="GO" id="GO:0009585">
    <property type="term" value="P:red, far-red light phototransduction"/>
    <property type="evidence" value="ECO:0007669"/>
    <property type="project" value="UniProtKB-KW"/>
</dbReference>
<dbReference type="GO" id="GO:0010099">
    <property type="term" value="P:regulation of photomorphogenesis"/>
    <property type="evidence" value="ECO:0000318"/>
    <property type="project" value="GO_Central"/>
</dbReference>
<dbReference type="GO" id="GO:0010218">
    <property type="term" value="P:response to far red light"/>
    <property type="evidence" value="ECO:0000318"/>
    <property type="project" value="GO_Central"/>
</dbReference>
<dbReference type="GO" id="GO:0010114">
    <property type="term" value="P:response to red light"/>
    <property type="evidence" value="ECO:0000318"/>
    <property type="project" value="GO_Central"/>
</dbReference>
<dbReference type="CDD" id="cd14704">
    <property type="entry name" value="bZIP_HY5-like"/>
    <property type="match status" value="1"/>
</dbReference>
<dbReference type="FunFam" id="1.20.5.490:FF:000004">
    <property type="entry name" value="Transcription factor HY5"/>
    <property type="match status" value="1"/>
</dbReference>
<dbReference type="Gene3D" id="1.20.5.490">
    <property type="entry name" value="Single helix bin"/>
    <property type="match status" value="1"/>
</dbReference>
<dbReference type="InterPro" id="IPR004827">
    <property type="entry name" value="bZIP"/>
</dbReference>
<dbReference type="InterPro" id="IPR046347">
    <property type="entry name" value="bZIP_sf"/>
</dbReference>
<dbReference type="InterPro" id="IPR044280">
    <property type="entry name" value="Hac1/HY5"/>
</dbReference>
<dbReference type="PANTHER" id="PTHR46714">
    <property type="entry name" value="TRANSCRIPTIONAL ACTIVATOR HAC1"/>
    <property type="match status" value="1"/>
</dbReference>
<dbReference type="PANTHER" id="PTHR46714:SF6">
    <property type="entry name" value="TRANSCRIPTIONAL ACTIVATOR HAC1"/>
    <property type="match status" value="1"/>
</dbReference>
<dbReference type="Pfam" id="PF00170">
    <property type="entry name" value="bZIP_1"/>
    <property type="match status" value="1"/>
</dbReference>
<dbReference type="SMART" id="SM00338">
    <property type="entry name" value="BRLZ"/>
    <property type="match status" value="1"/>
</dbReference>
<dbReference type="SUPFAM" id="SSF57959">
    <property type="entry name" value="Leucine zipper domain"/>
    <property type="match status" value="1"/>
</dbReference>
<dbReference type="PROSITE" id="PS50217">
    <property type="entry name" value="BZIP"/>
    <property type="match status" value="1"/>
</dbReference>
<dbReference type="PROSITE" id="PS00036">
    <property type="entry name" value="BZIP_BASIC"/>
    <property type="match status" value="1"/>
</dbReference>
<feature type="chain" id="PRO_0000076561" description="Transcription factor HY5">
    <location>
        <begin position="1"/>
        <end position="158"/>
    </location>
</feature>
<feature type="domain" description="bZIP" evidence="2">
    <location>
        <begin position="86"/>
        <end position="149"/>
    </location>
</feature>
<feature type="region of interest" description="Disordered" evidence="3">
    <location>
        <begin position="1"/>
        <end position="105"/>
    </location>
</feature>
<feature type="region of interest" description="Interaction with COP1" evidence="1">
    <location>
        <begin position="35"/>
        <end position="46"/>
    </location>
</feature>
<feature type="region of interest" description="Basic motif" evidence="2">
    <location>
        <begin position="88"/>
        <end position="108"/>
    </location>
</feature>
<feature type="region of interest" description="Leucine-zipper" evidence="2">
    <location>
        <begin position="114"/>
        <end position="142"/>
    </location>
</feature>
<feature type="compositionally biased region" description="Low complexity" evidence="3">
    <location>
        <begin position="1"/>
        <end position="25"/>
    </location>
</feature>
<feature type="compositionally biased region" description="Basic and acidic residues" evidence="3">
    <location>
        <begin position="26"/>
        <end position="44"/>
    </location>
</feature>
<feature type="compositionally biased region" description="Low complexity" evidence="3">
    <location>
        <begin position="47"/>
        <end position="58"/>
    </location>
</feature>
<organism>
    <name type="scientific">Solanum lycopersicum</name>
    <name type="common">Tomato</name>
    <name type="synonym">Lycopersicon esculentum</name>
    <dbReference type="NCBI Taxonomy" id="4081"/>
    <lineage>
        <taxon>Eukaryota</taxon>
        <taxon>Viridiplantae</taxon>
        <taxon>Streptophyta</taxon>
        <taxon>Embryophyta</taxon>
        <taxon>Tracheophyta</taxon>
        <taxon>Spermatophyta</taxon>
        <taxon>Magnoliopsida</taxon>
        <taxon>eudicotyledons</taxon>
        <taxon>Gunneridae</taxon>
        <taxon>Pentapetalae</taxon>
        <taxon>asterids</taxon>
        <taxon>lamiids</taxon>
        <taxon>Solanales</taxon>
        <taxon>Solanaceae</taxon>
        <taxon>Solanoideae</taxon>
        <taxon>Solaneae</taxon>
        <taxon>Solanum</taxon>
        <taxon>Solanum subgen. Lycopersicon</taxon>
    </lineage>
</organism>
<accession>Q9SM50</accession>
<keyword id="KW-0010">Activator</keyword>
<keyword id="KW-0238">DNA-binding</keyword>
<keyword id="KW-0539">Nucleus</keyword>
<keyword id="KW-0607">Phytochrome signaling pathway</keyword>
<keyword id="KW-1185">Reference proteome</keyword>
<keyword id="KW-0804">Transcription</keyword>
<keyword id="KW-0805">Transcription regulation</keyword>
<keyword id="KW-0832">Ubl conjugation</keyword>